<protein>
    <recommendedName>
        <fullName evidence="1">UPF0178 protein SACOL0741</fullName>
    </recommendedName>
</protein>
<gene>
    <name type="ordered locus">SACOL0741</name>
</gene>
<proteinExistence type="inferred from homology"/>
<sequence length="152" mass="17258">MTHIIIDGDACPVVDSIIDLTTETGIFVTIIRSFSHFSNQLYPPHVSTLYVDDGPDAVDYKIVQLSTKDDIVVTQDYGLASLLVDKVLIVMHHNGKIYNSKNIQQLLDKRYMNAQIRKQGGRHKGPPPFTKQDQKVFEQSLLKVIHRIKELD</sequence>
<accession>Q5HHY7</accession>
<name>Y741_STAAC</name>
<evidence type="ECO:0000255" key="1">
    <source>
        <dbReference type="HAMAP-Rule" id="MF_00489"/>
    </source>
</evidence>
<feature type="chain" id="PRO_0000176008" description="UPF0178 protein SACOL0741">
    <location>
        <begin position="1"/>
        <end position="152"/>
    </location>
</feature>
<dbReference type="EMBL" id="CP000046">
    <property type="protein sequence ID" value="AAW37802.1"/>
    <property type="molecule type" value="Genomic_DNA"/>
</dbReference>
<dbReference type="RefSeq" id="WP_000148828.1">
    <property type="nucleotide sequence ID" value="NZ_JBGOFO010000005.1"/>
</dbReference>
<dbReference type="SMR" id="Q5HHY7"/>
<dbReference type="KEGG" id="sac:SACOL0741"/>
<dbReference type="HOGENOM" id="CLU_106619_0_0_9"/>
<dbReference type="Proteomes" id="UP000000530">
    <property type="component" value="Chromosome"/>
</dbReference>
<dbReference type="HAMAP" id="MF_00489">
    <property type="entry name" value="UPF0178"/>
    <property type="match status" value="1"/>
</dbReference>
<dbReference type="InterPro" id="IPR003791">
    <property type="entry name" value="UPF0178"/>
</dbReference>
<dbReference type="NCBIfam" id="NF001095">
    <property type="entry name" value="PRK00124.1"/>
    <property type="match status" value="1"/>
</dbReference>
<dbReference type="PANTHER" id="PTHR35146">
    <property type="entry name" value="UPF0178 PROTEIN YAII"/>
    <property type="match status" value="1"/>
</dbReference>
<dbReference type="PANTHER" id="PTHR35146:SF1">
    <property type="entry name" value="UPF0178 PROTEIN YAII"/>
    <property type="match status" value="1"/>
</dbReference>
<dbReference type="Pfam" id="PF02639">
    <property type="entry name" value="DUF188"/>
    <property type="match status" value="1"/>
</dbReference>
<reference key="1">
    <citation type="journal article" date="2005" name="J. Bacteriol.">
        <title>Insights on evolution of virulence and resistance from the complete genome analysis of an early methicillin-resistant Staphylococcus aureus strain and a biofilm-producing methicillin-resistant Staphylococcus epidermidis strain.</title>
        <authorList>
            <person name="Gill S.R."/>
            <person name="Fouts D.E."/>
            <person name="Archer G.L."/>
            <person name="Mongodin E.F."/>
            <person name="DeBoy R.T."/>
            <person name="Ravel J."/>
            <person name="Paulsen I.T."/>
            <person name="Kolonay J.F."/>
            <person name="Brinkac L.M."/>
            <person name="Beanan M.J."/>
            <person name="Dodson R.J."/>
            <person name="Daugherty S.C."/>
            <person name="Madupu R."/>
            <person name="Angiuoli S.V."/>
            <person name="Durkin A.S."/>
            <person name="Haft D.H."/>
            <person name="Vamathevan J.J."/>
            <person name="Khouri H."/>
            <person name="Utterback T.R."/>
            <person name="Lee C."/>
            <person name="Dimitrov G."/>
            <person name="Jiang L."/>
            <person name="Qin H."/>
            <person name="Weidman J."/>
            <person name="Tran K."/>
            <person name="Kang K.H."/>
            <person name="Hance I.R."/>
            <person name="Nelson K.E."/>
            <person name="Fraser C.M."/>
        </authorList>
    </citation>
    <scope>NUCLEOTIDE SEQUENCE [LARGE SCALE GENOMIC DNA]</scope>
    <source>
        <strain>COL</strain>
    </source>
</reference>
<comment type="similarity">
    <text evidence="1">Belongs to the UPF0178 family.</text>
</comment>
<organism>
    <name type="scientific">Staphylococcus aureus (strain COL)</name>
    <dbReference type="NCBI Taxonomy" id="93062"/>
    <lineage>
        <taxon>Bacteria</taxon>
        <taxon>Bacillati</taxon>
        <taxon>Bacillota</taxon>
        <taxon>Bacilli</taxon>
        <taxon>Bacillales</taxon>
        <taxon>Staphylococcaceae</taxon>
        <taxon>Staphylococcus</taxon>
    </lineage>
</organism>